<gene>
    <name evidence="1" type="primary">petG</name>
</gene>
<organism>
    <name type="scientific">Beta trigyna</name>
    <name type="common">Caucasian wild beet</name>
    <dbReference type="NCBI Taxonomy" id="19769"/>
    <lineage>
        <taxon>Eukaryota</taxon>
        <taxon>Viridiplantae</taxon>
        <taxon>Streptophyta</taxon>
        <taxon>Embryophyta</taxon>
        <taxon>Tracheophyta</taxon>
        <taxon>Spermatophyta</taxon>
        <taxon>Magnoliopsida</taxon>
        <taxon>eudicotyledons</taxon>
        <taxon>Gunneridae</taxon>
        <taxon>Pentapetalae</taxon>
        <taxon>Caryophyllales</taxon>
        <taxon>Chenopodiaceae</taxon>
        <taxon>Betoideae</taxon>
        <taxon>Beta</taxon>
    </lineage>
</organism>
<proteinExistence type="inferred from homology"/>
<evidence type="ECO:0000255" key="1">
    <source>
        <dbReference type="HAMAP-Rule" id="MF_00432"/>
    </source>
</evidence>
<sequence>MIEVFLFGIVLGLIPITLAGLFVTAYLQYRRGDQLDL</sequence>
<dbReference type="EMBL" id="D38020">
    <property type="protein sequence ID" value="BAA07222.1"/>
    <property type="molecule type" value="Genomic_DNA"/>
</dbReference>
<dbReference type="SMR" id="P69453"/>
<dbReference type="GO" id="GO:0009535">
    <property type="term" value="C:chloroplast thylakoid membrane"/>
    <property type="evidence" value="ECO:0007669"/>
    <property type="project" value="UniProtKB-SubCell"/>
</dbReference>
<dbReference type="GO" id="GO:0009512">
    <property type="term" value="C:cytochrome b6f complex"/>
    <property type="evidence" value="ECO:0007669"/>
    <property type="project" value="InterPro"/>
</dbReference>
<dbReference type="GO" id="GO:0045158">
    <property type="term" value="F:electron transporter, transferring electrons within cytochrome b6/f complex of photosystem II activity"/>
    <property type="evidence" value="ECO:0007669"/>
    <property type="project" value="UniProtKB-UniRule"/>
</dbReference>
<dbReference type="GO" id="GO:0017004">
    <property type="term" value="P:cytochrome complex assembly"/>
    <property type="evidence" value="ECO:0007669"/>
    <property type="project" value="UniProtKB-UniRule"/>
</dbReference>
<dbReference type="GO" id="GO:0015979">
    <property type="term" value="P:photosynthesis"/>
    <property type="evidence" value="ECO:0007669"/>
    <property type="project" value="UniProtKB-KW"/>
</dbReference>
<dbReference type="HAMAP" id="MF_00432">
    <property type="entry name" value="Cytb6_f_PetG"/>
    <property type="match status" value="1"/>
</dbReference>
<dbReference type="InterPro" id="IPR003683">
    <property type="entry name" value="Cyt_6/f_cplx_su5"/>
</dbReference>
<dbReference type="InterPro" id="IPR036099">
    <property type="entry name" value="Cyt_6/f_cplx_su5_sf"/>
</dbReference>
<dbReference type="NCBIfam" id="NF001907">
    <property type="entry name" value="PRK00665.1"/>
    <property type="match status" value="1"/>
</dbReference>
<dbReference type="Pfam" id="PF02529">
    <property type="entry name" value="PetG"/>
    <property type="match status" value="1"/>
</dbReference>
<dbReference type="PIRSF" id="PIRSF000034">
    <property type="entry name" value="Cyt_b6-f_V"/>
    <property type="match status" value="1"/>
</dbReference>
<dbReference type="SUPFAM" id="SSF103446">
    <property type="entry name" value="PetG subunit of the cytochrome b6f complex"/>
    <property type="match status" value="1"/>
</dbReference>
<feature type="chain" id="PRO_0000216370" description="Cytochrome b6-f complex subunit 5">
    <location>
        <begin position="1"/>
        <end position="37"/>
    </location>
</feature>
<feature type="transmembrane region" description="Helical" evidence="1">
    <location>
        <begin position="5"/>
        <end position="25"/>
    </location>
</feature>
<geneLocation type="chloroplast"/>
<reference key="1">
    <citation type="journal article" date="1995" name="Curr. Genet.">
        <title>The chloroplast trnP-trnW-petG gene cluster in the mitochondrial genomes of Beta vulgaris, B. trigyna and B. webbiana: evolutionary aspects.</title>
        <authorList>
            <person name="Kubo T."/>
            <person name="Yanai Y."/>
            <person name="Kinoshita T."/>
            <person name="Mikami T."/>
        </authorList>
    </citation>
    <scope>NUCLEOTIDE SEQUENCE [GENOMIC DNA]</scope>
    <source>
        <strain>cv. SP753012-O</strain>
        <tissue>Leaf</tissue>
    </source>
</reference>
<name>PETG_BETTR</name>
<keyword id="KW-0150">Chloroplast</keyword>
<keyword id="KW-0249">Electron transport</keyword>
<keyword id="KW-0472">Membrane</keyword>
<keyword id="KW-0602">Photosynthesis</keyword>
<keyword id="KW-0934">Plastid</keyword>
<keyword id="KW-0793">Thylakoid</keyword>
<keyword id="KW-0812">Transmembrane</keyword>
<keyword id="KW-1133">Transmembrane helix</keyword>
<keyword id="KW-0813">Transport</keyword>
<comment type="function">
    <text evidence="1">Component of the cytochrome b6-f complex, which mediates electron transfer between photosystem II (PSII) and photosystem I (PSI), cyclic electron flow around PSI, and state transitions. PetG is required for either the stability or assembly of the cytochrome b6-f complex.</text>
</comment>
<comment type="subunit">
    <text evidence="1">The 4 large subunits of the cytochrome b6-f complex are cytochrome b6, subunit IV (17 kDa polypeptide, PetD), cytochrome f and the Rieske protein, while the 4 small subunits are PetG, PetL, PetM and PetN. The complex functions as a dimer.</text>
</comment>
<comment type="subcellular location">
    <subcellularLocation>
        <location evidence="1">Plastid</location>
        <location evidence="1">Chloroplast thylakoid membrane</location>
        <topology evidence="1">Single-pass membrane protein</topology>
    </subcellularLocation>
</comment>
<comment type="similarity">
    <text evidence="1">Belongs to the PetG family.</text>
</comment>
<protein>
    <recommendedName>
        <fullName evidence="1">Cytochrome b6-f complex subunit 5</fullName>
    </recommendedName>
    <alternativeName>
        <fullName evidence="1">Cytochrome b6-f complex subunit PetG</fullName>
    </alternativeName>
    <alternativeName>
        <fullName evidence="1">Cytochrome b6-f complex subunit V</fullName>
    </alternativeName>
</protein>
<accession>P69453</accession>
<accession>P12121</accession>
<accession>P32973</accession>